<keyword id="KW-0131">Cell cycle</keyword>
<keyword id="KW-0472">Membrane</keyword>
<keyword id="KW-0812">Transmembrane</keyword>
<keyword id="KW-1133">Transmembrane helix</keyword>
<keyword id="KW-0926">Vacuole</keyword>
<proteinExistence type="inferred from homology"/>
<accession>C7GUS4</accession>
<name>AIM20_YEAS2</name>
<dbReference type="EMBL" id="ACFL01000319">
    <property type="protein sequence ID" value="EEU05450.1"/>
    <property type="molecule type" value="Genomic_DNA"/>
</dbReference>
<dbReference type="OrthoDB" id="32958at4893"/>
<dbReference type="Proteomes" id="UP000008073">
    <property type="component" value="Unassembled WGS sequence"/>
</dbReference>
<dbReference type="GO" id="GO:0005774">
    <property type="term" value="C:vacuolar membrane"/>
    <property type="evidence" value="ECO:0007669"/>
    <property type="project" value="UniProtKB-SubCell"/>
</dbReference>
<organism>
    <name type="scientific">Saccharomyces cerevisiae (strain JAY291)</name>
    <name type="common">Baker's yeast</name>
    <dbReference type="NCBI Taxonomy" id="574961"/>
    <lineage>
        <taxon>Eukaryota</taxon>
        <taxon>Fungi</taxon>
        <taxon>Dikarya</taxon>
        <taxon>Ascomycota</taxon>
        <taxon>Saccharomycotina</taxon>
        <taxon>Saccharomycetes</taxon>
        <taxon>Saccharomycetales</taxon>
        <taxon>Saccharomycetaceae</taxon>
        <taxon>Saccharomyces</taxon>
    </lineage>
</organism>
<comment type="function">
    <text evidence="1">Involved in cell cycle progression and surviving DNA damage.</text>
</comment>
<comment type="subcellular location">
    <subcellularLocation>
        <location evidence="1">Vacuole membrane</location>
        <topology evidence="1">Single-pass membrane protein</topology>
    </subcellularLocation>
</comment>
<comment type="similarity">
    <text evidence="3">Belongs to the SKG1 family.</text>
</comment>
<gene>
    <name type="primary">AIM20</name>
    <name type="ORF">C1Q_04179</name>
</gene>
<protein>
    <recommendedName>
        <fullName>Altered inheritance of mitochondria protein 20</fullName>
    </recommendedName>
</protein>
<sequence>MGNVSVAVGTAVGIPIAVGVIIALIFWCKLQRRYKKEEIRDADLEKMVMEEVAVSVYDGFKAEINSSSEASTINEKEANQDLKPCQEKTAKAGYTPAYRRQLNASMGTLRPKKQSTAYINVPVIFSGEKVNYGMVRDPSYSFMYPLTLSRKETSSLRSASTSNLSSSTENTALHEEIKLDDPYENDFTNYTVNKREFIDSLRPR</sequence>
<reference key="1">
    <citation type="journal article" date="2009" name="Genome Res.">
        <title>Genome structure of a Saccharomyces cerevisiae strain widely used in bioethanol production.</title>
        <authorList>
            <person name="Argueso J.L."/>
            <person name="Carazzolle M.F."/>
            <person name="Mieczkowski P.A."/>
            <person name="Duarte F.M."/>
            <person name="Netto O.V.C."/>
            <person name="Missawa S.K."/>
            <person name="Galzerani F."/>
            <person name="Costa G.G.L."/>
            <person name="Vidal R.O."/>
            <person name="Noronha M.F."/>
            <person name="Dominska M."/>
            <person name="Andrietta M.G.S."/>
            <person name="Andrietta S.R."/>
            <person name="Cunha A.F."/>
            <person name="Gomes L.H."/>
            <person name="Tavares F.C.A."/>
            <person name="Alcarde A.R."/>
            <person name="Dietrich F.S."/>
            <person name="McCusker J.H."/>
            <person name="Petes T.D."/>
            <person name="Pereira G.A.G."/>
        </authorList>
    </citation>
    <scope>NUCLEOTIDE SEQUENCE [LARGE SCALE GENOMIC DNA]</scope>
    <source>
        <strain>JAY291</strain>
    </source>
</reference>
<evidence type="ECO:0000250" key="1"/>
<evidence type="ECO:0000255" key="2"/>
<evidence type="ECO:0000305" key="3"/>
<feature type="chain" id="PRO_0000399679" description="Altered inheritance of mitochondria protein 20">
    <location>
        <begin position="1"/>
        <end position="204"/>
    </location>
</feature>
<feature type="transmembrane region" description="Helical" evidence="2">
    <location>
        <begin position="6"/>
        <end position="26"/>
    </location>
</feature>